<comment type="function">
    <text evidence="4">Contributes to the transparency and refractive index of the lens. Acts as a chaperone, preventing aggregation of various proteins under a wide range of stress conditions. Required for the correct formation of lens intermediate filaments as part of a complex composed of BFSP1, BFSP2 and CRYAA.</text>
</comment>
<comment type="subunit">
    <text evidence="2 4">Heteromer composed of three CRYAA and one CRYAB subunits. Inter-subunit bridging via zinc ions enhances stability, which is crucial as there is no protein turn over in the lens. Can also form homodimers and homotetramers (dimers of dimers) which serve as the building blocks of homooligomers (By similarity). Within homooligomers, the zinc-binding motif is created from residues of 3 different molecules. His-100 and Glu-102 from one molecule are ligands of the zinc ion, and His-107 and His-154 residues from additional molecules complete the site with tetrahedral coordination geometry (By similarity). Part of a complex required for lens intermediate filament formation composed of BFSP1, BFSP2 and CRYAA (By similarity).</text>
</comment>
<comment type="subcellular location">
    <subcellularLocation>
        <location evidence="4">Cytoplasm</location>
    </subcellularLocation>
    <subcellularLocation>
        <location evidence="4">Nucleus</location>
    </subcellularLocation>
    <text evidence="4">Translocates to the nucleus during heat shock and resides in sub-nuclear structures known as SC35 speckles or nuclear splicing speckles.</text>
</comment>
<comment type="PTM">
    <text evidence="4">Acetylation at Lys-70 may increase chaperone activity.</text>
</comment>
<comment type="PTM">
    <text evidence="4">Undergoes age-dependent proteolytical cleavage at the C-terminus.</text>
</comment>
<comment type="similarity">
    <text evidence="5">Belongs to the small heat shock protein (HSP20) family.</text>
</comment>
<name>CRYAA_EULFU</name>
<proteinExistence type="evidence at protein level"/>
<evidence type="ECO:0000250" key="1"/>
<evidence type="ECO:0000250" key="2">
    <source>
        <dbReference type="UniProtKB" id="P02470"/>
    </source>
</evidence>
<evidence type="ECO:0000250" key="3">
    <source>
        <dbReference type="UniProtKB" id="P02474"/>
    </source>
</evidence>
<evidence type="ECO:0000250" key="4">
    <source>
        <dbReference type="UniProtKB" id="P02489"/>
    </source>
</evidence>
<evidence type="ECO:0000255" key="5">
    <source>
        <dbReference type="PROSITE-ProRule" id="PRU00285"/>
    </source>
</evidence>
<evidence type="ECO:0000256" key="6">
    <source>
        <dbReference type="SAM" id="MobiDB-lite"/>
    </source>
</evidence>
<evidence type="ECO:0000305" key="7"/>
<sequence>MDVTIQHPWFKRPLGPFYPSRLFDQFFGEGLFEYDLLPFLSSTISPYYRQSLFRTVLDSGVSEVRSDRDKFVIFLDVKHFSPEDLTVKVQEDFVEIHGKHNERQDDHGYISREFHRRYRLPSNVDQSALSCSLSADGMLTFSGPKVQSGLDAGHSERAIPVSREEKPSSAPSS</sequence>
<keyword id="KW-0007">Acetylation</keyword>
<keyword id="KW-0143">Chaperone</keyword>
<keyword id="KW-0963">Cytoplasm</keyword>
<keyword id="KW-0903">Direct protein sequencing</keyword>
<keyword id="KW-0273">Eye lens protein</keyword>
<keyword id="KW-0325">Glycoprotein</keyword>
<keyword id="KW-0479">Metal-binding</keyword>
<keyword id="KW-0488">Methylation</keyword>
<keyword id="KW-0539">Nucleus</keyword>
<keyword id="KW-0597">Phosphoprotein</keyword>
<keyword id="KW-0862">Zinc</keyword>
<gene>
    <name type="primary">CRYAA</name>
</gene>
<accession>P02494</accession>
<reference key="1">
    <citation type="book" date="1980" name="Protides of the biological fluids, Proc. 28th colloquium">
        <title>Trends in the molecular evolution of alpha-crystallin.</title>
        <editorList>
            <person name="Peeters H."/>
        </editorList>
        <authorList>
            <person name="de Jong W.W."/>
            <person name="Zweers A."/>
            <person name="Goodman M."/>
        </authorList>
    </citation>
    <scope>PARTIAL PROTEIN SEQUENCE</scope>
</reference>
<dbReference type="PIR" id="A02897">
    <property type="entry name" value="CYLEAA"/>
</dbReference>
<dbReference type="SMR" id="P02494"/>
<dbReference type="GlyCosmos" id="P02494">
    <property type="glycosylation" value="1 site, No reported glycans"/>
</dbReference>
<dbReference type="GO" id="GO:0005737">
    <property type="term" value="C:cytoplasm"/>
    <property type="evidence" value="ECO:0000250"/>
    <property type="project" value="UniProtKB"/>
</dbReference>
<dbReference type="GO" id="GO:0005634">
    <property type="term" value="C:nucleus"/>
    <property type="evidence" value="ECO:0000250"/>
    <property type="project" value="UniProtKB"/>
</dbReference>
<dbReference type="GO" id="GO:0046872">
    <property type="term" value="F:metal ion binding"/>
    <property type="evidence" value="ECO:0007669"/>
    <property type="project" value="UniProtKB-KW"/>
</dbReference>
<dbReference type="GO" id="GO:0005212">
    <property type="term" value="F:structural constituent of eye lens"/>
    <property type="evidence" value="ECO:0007669"/>
    <property type="project" value="UniProtKB-KW"/>
</dbReference>
<dbReference type="GO" id="GO:0051082">
    <property type="term" value="F:unfolded protein binding"/>
    <property type="evidence" value="ECO:0007669"/>
    <property type="project" value="TreeGrafter"/>
</dbReference>
<dbReference type="GO" id="GO:0002088">
    <property type="term" value="P:lens development in camera-type eye"/>
    <property type="evidence" value="ECO:0007669"/>
    <property type="project" value="TreeGrafter"/>
</dbReference>
<dbReference type="GO" id="GO:0043066">
    <property type="term" value="P:negative regulation of apoptotic process"/>
    <property type="evidence" value="ECO:0007669"/>
    <property type="project" value="TreeGrafter"/>
</dbReference>
<dbReference type="GO" id="GO:0042026">
    <property type="term" value="P:protein refolding"/>
    <property type="evidence" value="ECO:0007669"/>
    <property type="project" value="TreeGrafter"/>
</dbReference>
<dbReference type="GO" id="GO:0009408">
    <property type="term" value="P:response to heat"/>
    <property type="evidence" value="ECO:0007669"/>
    <property type="project" value="TreeGrafter"/>
</dbReference>
<dbReference type="FunFam" id="2.60.40.790:FF:000008">
    <property type="entry name" value="Alpha-crystallin A chain"/>
    <property type="match status" value="1"/>
</dbReference>
<dbReference type="Gene3D" id="2.60.40.790">
    <property type="match status" value="1"/>
</dbReference>
<dbReference type="InterPro" id="IPR002068">
    <property type="entry name" value="A-crystallin/Hsp20_dom"/>
</dbReference>
<dbReference type="InterPro" id="IPR055269">
    <property type="entry name" value="Alpha-crystallin/HSP_16"/>
</dbReference>
<dbReference type="InterPro" id="IPR001436">
    <property type="entry name" value="Alpha-crystallin/sHSP_animal"/>
</dbReference>
<dbReference type="InterPro" id="IPR003090">
    <property type="entry name" value="Alpha-crystallin_N"/>
</dbReference>
<dbReference type="InterPro" id="IPR008978">
    <property type="entry name" value="HSP20-like_chaperone"/>
</dbReference>
<dbReference type="PANTHER" id="PTHR45640:SF14">
    <property type="entry name" value="ALPHA-CRYSTALLIN A CHAIN"/>
    <property type="match status" value="1"/>
</dbReference>
<dbReference type="PANTHER" id="PTHR45640">
    <property type="entry name" value="HEAT SHOCK PROTEIN HSP-12.2-RELATED"/>
    <property type="match status" value="1"/>
</dbReference>
<dbReference type="Pfam" id="PF00525">
    <property type="entry name" value="Crystallin"/>
    <property type="match status" value="1"/>
</dbReference>
<dbReference type="Pfam" id="PF00011">
    <property type="entry name" value="HSP20"/>
    <property type="match status" value="1"/>
</dbReference>
<dbReference type="PIRSF" id="PIRSF036514">
    <property type="entry name" value="Sm_HSP_B1"/>
    <property type="match status" value="1"/>
</dbReference>
<dbReference type="PRINTS" id="PR00299">
    <property type="entry name" value="ACRYSTALLIN"/>
</dbReference>
<dbReference type="SUPFAM" id="SSF49764">
    <property type="entry name" value="HSP20-like chaperones"/>
    <property type="match status" value="1"/>
</dbReference>
<dbReference type="PROSITE" id="PS01031">
    <property type="entry name" value="SHSP"/>
    <property type="match status" value="1"/>
</dbReference>
<protein>
    <recommendedName>
        <fullName>Alpha-crystallin A chain</fullName>
    </recommendedName>
</protein>
<organism>
    <name type="scientific">Eulemur fulvus fulvus</name>
    <name type="common">Brown lemur</name>
    <dbReference type="NCBI Taxonomy" id="40322"/>
    <lineage>
        <taxon>Eukaryota</taxon>
        <taxon>Metazoa</taxon>
        <taxon>Chordata</taxon>
        <taxon>Craniata</taxon>
        <taxon>Vertebrata</taxon>
        <taxon>Euteleostomi</taxon>
        <taxon>Mammalia</taxon>
        <taxon>Eutheria</taxon>
        <taxon>Euarchontoglires</taxon>
        <taxon>Primates</taxon>
        <taxon>Strepsirrhini</taxon>
        <taxon>Lemuriformes</taxon>
        <taxon>Lemuridae</taxon>
        <taxon>Eulemur</taxon>
    </lineage>
</organism>
<feature type="chain" id="PRO_0000125858" description="Alpha-crystallin A chain">
    <location>
        <begin position="1"/>
        <end position="173"/>
    </location>
</feature>
<feature type="domain" description="sHSP" evidence="5">
    <location>
        <begin position="52"/>
        <end position="162"/>
    </location>
</feature>
<feature type="region of interest" description="Required for complex formation with BFSP1 and BFSP2" evidence="4">
    <location>
        <begin position="1"/>
        <end position="63"/>
    </location>
</feature>
<feature type="region of interest" description="Disordered" evidence="6">
    <location>
        <begin position="145"/>
        <end position="173"/>
    </location>
</feature>
<feature type="compositionally biased region" description="Basic and acidic residues" evidence="6">
    <location>
        <begin position="153"/>
        <end position="167"/>
    </location>
</feature>
<feature type="binding site" evidence="2">
    <location>
        <position position="100"/>
    </location>
    <ligand>
        <name>Zn(2+)</name>
        <dbReference type="ChEBI" id="CHEBI:29105"/>
        <label>1</label>
    </ligand>
</feature>
<feature type="binding site" evidence="2">
    <location>
        <position position="102"/>
    </location>
    <ligand>
        <name>Zn(2+)</name>
        <dbReference type="ChEBI" id="CHEBI:29105"/>
        <label>1</label>
    </ligand>
</feature>
<feature type="binding site" evidence="2">
    <location>
        <position position="107"/>
    </location>
    <ligand>
        <name>Zn(2+)</name>
        <dbReference type="ChEBI" id="CHEBI:29105"/>
        <label>2</label>
    </ligand>
</feature>
<feature type="binding site" evidence="2">
    <location>
        <position position="154"/>
    </location>
    <ligand>
        <name>Zn(2+)</name>
        <dbReference type="ChEBI" id="CHEBI:29105"/>
        <label>3</label>
    </ligand>
</feature>
<feature type="modified residue" description="N-acetylmethionine" evidence="3 7">
    <location>
        <position position="1"/>
    </location>
</feature>
<feature type="modified residue" description="Deamidated glutamine; partial" evidence="1">
    <location>
        <position position="6"/>
    </location>
</feature>
<feature type="modified residue" description="Phosphoserine" evidence="4">
    <location>
        <position position="45"/>
    </location>
</feature>
<feature type="modified residue" description="Deamidated glutamine; partial" evidence="1">
    <location>
        <position position="50"/>
    </location>
</feature>
<feature type="modified residue" description="N6-acetyllysine" evidence="4">
    <location>
        <position position="70"/>
    </location>
</feature>
<feature type="modified residue" description="Deamidated glutamine; partial" evidence="1">
    <location>
        <position position="90"/>
    </location>
</feature>
<feature type="modified residue" description="N6-acetyllysine" evidence="4">
    <location>
        <position position="99"/>
    </location>
</feature>
<feature type="modified residue" description="Deamidated asparagine; partial" evidence="1">
    <location>
        <position position="101"/>
    </location>
</feature>
<feature type="modified residue" description="Phosphoserine" evidence="2">
    <location>
        <position position="122"/>
    </location>
</feature>
<feature type="modified residue" description="Deamidated asparagine; partial" evidence="1">
    <location>
        <position position="123"/>
    </location>
</feature>
<feature type="modified residue" description="Deamidated glutamine; partial" evidence="1">
    <location>
        <position position="147"/>
    </location>
</feature>
<feature type="glycosylation site" description="O-linked (GlcNAc) serine" evidence="1">
    <location>
        <position position="162"/>
    </location>
</feature>